<accession>O48851</accession>
<accession>Q0WRZ8</accession>
<accession>Q84WI9</accession>
<evidence type="ECO:0000255" key="1"/>
<evidence type="ECO:0000255" key="2">
    <source>
        <dbReference type="PROSITE-ProRule" id="PRU00498"/>
    </source>
</evidence>
<evidence type="ECO:0000303" key="3">
    <source>
    </source>
</evidence>
<evidence type="ECO:0000305" key="4"/>
<evidence type="ECO:0000312" key="5">
    <source>
        <dbReference type="Araport" id="AT2G32660"/>
    </source>
</evidence>
<evidence type="ECO:0000312" key="6">
    <source>
        <dbReference type="EMBL" id="AAC04497.1"/>
    </source>
</evidence>
<evidence type="ECO:0000312" key="7">
    <source>
        <dbReference type="EMBL" id="AAM14989.1"/>
    </source>
</evidence>
<gene>
    <name evidence="3" type="primary">RLP22</name>
    <name evidence="5" type="ordered locus">At2g32660</name>
    <name evidence="6" type="ORF">F24L7.20</name>
    <name evidence="7" type="ORF">T26B15</name>
</gene>
<proteinExistence type="evidence at transcript level"/>
<sequence>MSNLRLRLLSLVSILYCIAALRCRPDQTETIKRFKNEFAFSSICRNDTNFFSGVVCDNTTGAVTVLELPGGCLRGTLRPNSSLFELSHLRYLNLSFNNFDSSPLSSAFGQLNNLEVLLLSSNGFTGQVPSSIRNLTKLTQLNLPHNKLTGDLPSLVQNLTKLLALDLSYNQFSGTIPSSFFTMPFLSYLDLSENHLTGSFEISNSSSKLENLNLGNNHFETEIIDPVLRLVNLRYLSLSFLNTSHPIDLSIFSPLQSLTHLDLHGNSLTLTSVYSDIDFPKNMEILLLSGCNISEFPRFLKSLKKLWYLDLSSNRIKGNVPDWIWSLPLLVSLDLSNNSFTGFNGSLDHVLANSSVQVLDIALNSFKGSFPNPPVSIINLSAWNNSFTGDIPLSVCNRTSLDVLDLSYNNFTGSIPPCMGNFTIVNLRKNKLEGNIPDEFYSGALTQTLDVGYNQLTGELPRSLLNCSFIRFLSVDHNRINDSFPLWLKALPNLKVLTLRSNSFHGPMSPPDDQSSLAFPKLQILEISHNRFTGSLPTNYFANWSVKSLKMYDEERLYMGDYSSDRFVYEDTLDLQYKGLYMEQGKVLTFYSAIDFSGNKLEGEIPESIGLLKTLIALNLSNNSFTGHIPMSFANVTELESLDLSGNKLSGEIPQELGRLSYLAYIDVSDNQLTGKIPQGTQIIGQPKSSFEGNSGLCGLPLEESCLREDAPSTQEPEEEEEEILEWRAAAIGYGPGVLFGLAIGHVVALYKPGWFIKNNGQNRLRGIRHP</sequence>
<comment type="subcellular location">
    <subcellularLocation>
        <location evidence="4">Cell membrane</location>
        <topology evidence="4">Single-pass type I membrane protein</topology>
    </subcellularLocation>
</comment>
<comment type="similarity">
    <text evidence="4">Belongs to the RLP family.</text>
</comment>
<comment type="sequence caution" evidence="4">
    <conflict type="erroneous initiation">
        <sequence resource="EMBL-CDS" id="AEC08713"/>
    </conflict>
    <text>Truncated N-terminus.</text>
</comment>
<comment type="sequence caution" evidence="4">
    <conflict type="erroneous initiation">
        <sequence resource="EMBL-CDS" id="BAF00101"/>
    </conflict>
    <text>Truncated N-terminus.</text>
</comment>
<protein>
    <recommendedName>
        <fullName evidence="3">Receptor like protein 22</fullName>
        <shortName evidence="3">AtRLP22</shortName>
    </recommendedName>
</protein>
<reference key="1">
    <citation type="journal article" date="1999" name="Nature">
        <title>Sequence and analysis of chromosome 2 of the plant Arabidopsis thaliana.</title>
        <authorList>
            <person name="Lin X."/>
            <person name="Kaul S."/>
            <person name="Rounsley S.D."/>
            <person name="Shea T.P."/>
            <person name="Benito M.-I."/>
            <person name="Town C.D."/>
            <person name="Fujii C.Y."/>
            <person name="Mason T.M."/>
            <person name="Bowman C.L."/>
            <person name="Barnstead M.E."/>
            <person name="Feldblyum T.V."/>
            <person name="Buell C.R."/>
            <person name="Ketchum K.A."/>
            <person name="Lee J.J."/>
            <person name="Ronning C.M."/>
            <person name="Koo H.L."/>
            <person name="Moffat K.S."/>
            <person name="Cronin L.A."/>
            <person name="Shen M."/>
            <person name="Pai G."/>
            <person name="Van Aken S."/>
            <person name="Umayam L."/>
            <person name="Tallon L.J."/>
            <person name="Gill J.E."/>
            <person name="Adams M.D."/>
            <person name="Carrera A.J."/>
            <person name="Creasy T.H."/>
            <person name="Goodman H.M."/>
            <person name="Somerville C.R."/>
            <person name="Copenhaver G.P."/>
            <person name="Preuss D."/>
            <person name="Nierman W.C."/>
            <person name="White O."/>
            <person name="Eisen J.A."/>
            <person name="Salzberg S.L."/>
            <person name="Fraser C.M."/>
            <person name="Venter J.C."/>
        </authorList>
    </citation>
    <scope>NUCLEOTIDE SEQUENCE [LARGE SCALE GENOMIC DNA]</scope>
    <source>
        <strain>cv. Columbia</strain>
    </source>
</reference>
<reference key="2">
    <citation type="journal article" date="2017" name="Plant J.">
        <title>Araport11: a complete reannotation of the Arabidopsis thaliana reference genome.</title>
        <authorList>
            <person name="Cheng C.Y."/>
            <person name="Krishnakumar V."/>
            <person name="Chan A.P."/>
            <person name="Thibaud-Nissen F."/>
            <person name="Schobel S."/>
            <person name="Town C.D."/>
        </authorList>
    </citation>
    <scope>GENOME REANNOTATION</scope>
    <source>
        <strain>cv. Columbia</strain>
    </source>
</reference>
<reference key="3">
    <citation type="submission" date="2006-07" db="EMBL/GenBank/DDBJ databases">
        <title>Large-scale analysis of RIKEN Arabidopsis full-length (RAFL) cDNAs.</title>
        <authorList>
            <person name="Totoki Y."/>
            <person name="Seki M."/>
            <person name="Ishida J."/>
            <person name="Nakajima M."/>
            <person name="Enju A."/>
            <person name="Kamiya A."/>
            <person name="Narusaka M."/>
            <person name="Shin-i T."/>
            <person name="Nakagawa M."/>
            <person name="Sakamoto N."/>
            <person name="Oishi K."/>
            <person name="Kohara Y."/>
            <person name="Kobayashi M."/>
            <person name="Toyoda A."/>
            <person name="Sakaki Y."/>
            <person name="Sakurai T."/>
            <person name="Iida K."/>
            <person name="Akiyama K."/>
            <person name="Satou M."/>
            <person name="Toyoda T."/>
            <person name="Konagaya A."/>
            <person name="Carninci P."/>
            <person name="Kawai J."/>
            <person name="Hayashizaki Y."/>
            <person name="Shinozaki K."/>
        </authorList>
    </citation>
    <scope>NUCLEOTIDE SEQUENCE [LARGE SCALE MRNA] OF 35-771</scope>
    <source>
        <strain>cv. Columbia</strain>
    </source>
</reference>
<reference key="4">
    <citation type="journal article" date="2003" name="Science">
        <title>Empirical analysis of transcriptional activity in the Arabidopsis genome.</title>
        <authorList>
            <person name="Yamada K."/>
            <person name="Lim J."/>
            <person name="Dale J.M."/>
            <person name="Chen H."/>
            <person name="Shinn P."/>
            <person name="Palm C.J."/>
            <person name="Southwick A.M."/>
            <person name="Wu H.C."/>
            <person name="Kim C.J."/>
            <person name="Nguyen M."/>
            <person name="Pham P.K."/>
            <person name="Cheuk R.F."/>
            <person name="Karlin-Newmann G."/>
            <person name="Liu S.X."/>
            <person name="Lam B."/>
            <person name="Sakano H."/>
            <person name="Wu T."/>
            <person name="Yu G."/>
            <person name="Miranda M."/>
            <person name="Quach H.L."/>
            <person name="Tripp M."/>
            <person name="Chang C.H."/>
            <person name="Lee J.M."/>
            <person name="Toriumi M.J."/>
            <person name="Chan M.M."/>
            <person name="Tang C.C."/>
            <person name="Onodera C.S."/>
            <person name="Deng J.M."/>
            <person name="Akiyama K."/>
            <person name="Ansari Y."/>
            <person name="Arakawa T."/>
            <person name="Banh J."/>
            <person name="Banno F."/>
            <person name="Bowser L."/>
            <person name="Brooks S.Y."/>
            <person name="Carninci P."/>
            <person name="Chao Q."/>
            <person name="Choy N."/>
            <person name="Enju A."/>
            <person name="Goldsmith A.D."/>
            <person name="Gurjal M."/>
            <person name="Hansen N.F."/>
            <person name="Hayashizaki Y."/>
            <person name="Johnson-Hopson C."/>
            <person name="Hsuan V.W."/>
            <person name="Iida K."/>
            <person name="Karnes M."/>
            <person name="Khan S."/>
            <person name="Koesema E."/>
            <person name="Ishida J."/>
            <person name="Jiang P.X."/>
            <person name="Jones T."/>
            <person name="Kawai J."/>
            <person name="Kamiya A."/>
            <person name="Meyers C."/>
            <person name="Nakajima M."/>
            <person name="Narusaka M."/>
            <person name="Seki M."/>
            <person name="Sakurai T."/>
            <person name="Satou M."/>
            <person name="Tamse R."/>
            <person name="Vaysberg M."/>
            <person name="Wallender E.K."/>
            <person name="Wong C."/>
            <person name="Yamamura Y."/>
            <person name="Yuan S."/>
            <person name="Shinozaki K."/>
            <person name="Davis R.W."/>
            <person name="Theologis A."/>
            <person name="Ecker J.R."/>
        </authorList>
    </citation>
    <scope>NUCLEOTIDE SEQUENCE [LARGE SCALE MRNA] OF 183-771</scope>
    <source>
        <strain>cv. Columbia</strain>
    </source>
</reference>
<reference key="5">
    <citation type="journal article" date="2005" name="Plant Physiol.">
        <title>Phylogenomic analysis of the receptor-like proteins of rice and Arabidopsis.</title>
        <authorList>
            <person name="Fritz-Laylin L.K."/>
            <person name="Krishnamurthy N."/>
            <person name="Toer M."/>
            <person name="Sjoelander K.V."/>
            <person name="Jones J.D."/>
        </authorList>
    </citation>
    <scope>GENE FAMILY</scope>
</reference>
<reference key="6">
    <citation type="journal article" date="2008" name="Plant Physiol.">
        <title>A genome-wide functional investigation into the roles of receptor-like proteins in Arabidopsis.</title>
        <authorList>
            <person name="Wang G."/>
            <person name="Ellendorff U."/>
            <person name="Kemp B."/>
            <person name="Mansfield J.W."/>
            <person name="Forsyth A."/>
            <person name="Mitchell K."/>
            <person name="Bastas K."/>
            <person name="Liu C.-M."/>
            <person name="Woods-Toer A."/>
            <person name="Zipfel C."/>
            <person name="de Wit P.J.G.M."/>
            <person name="Jones J.D.G."/>
            <person name="Toer M."/>
            <person name="Thomma B.P.H.J."/>
        </authorList>
    </citation>
    <scope>GENE FAMILY</scope>
    <scope>NOMENCLATURE</scope>
</reference>
<organism>
    <name type="scientific">Arabidopsis thaliana</name>
    <name type="common">Mouse-ear cress</name>
    <dbReference type="NCBI Taxonomy" id="3702"/>
    <lineage>
        <taxon>Eukaryota</taxon>
        <taxon>Viridiplantae</taxon>
        <taxon>Streptophyta</taxon>
        <taxon>Embryophyta</taxon>
        <taxon>Tracheophyta</taxon>
        <taxon>Spermatophyta</taxon>
        <taxon>Magnoliopsida</taxon>
        <taxon>eudicotyledons</taxon>
        <taxon>Gunneridae</taxon>
        <taxon>Pentapetalae</taxon>
        <taxon>rosids</taxon>
        <taxon>malvids</taxon>
        <taxon>Brassicales</taxon>
        <taxon>Brassicaceae</taxon>
        <taxon>Camelineae</taxon>
        <taxon>Arabidopsis</taxon>
    </lineage>
</organism>
<dbReference type="EMBL" id="AC003974">
    <property type="protein sequence ID" value="AAC04497.1"/>
    <property type="molecule type" value="Genomic_DNA"/>
</dbReference>
<dbReference type="EMBL" id="AC004681">
    <property type="protein sequence ID" value="AAM14989.1"/>
    <property type="molecule type" value="Genomic_DNA"/>
</dbReference>
<dbReference type="EMBL" id="CP002685">
    <property type="protein sequence ID" value="AEC08713.1"/>
    <property type="status" value="ALT_INIT"/>
    <property type="molecule type" value="Genomic_DNA"/>
</dbReference>
<dbReference type="EMBL" id="CP002685">
    <property type="protein sequence ID" value="ANM61731.1"/>
    <property type="molecule type" value="Genomic_DNA"/>
</dbReference>
<dbReference type="EMBL" id="AK228145">
    <property type="protein sequence ID" value="BAF00101.1"/>
    <property type="status" value="ALT_INIT"/>
    <property type="molecule type" value="mRNA"/>
</dbReference>
<dbReference type="EMBL" id="BT003164">
    <property type="protein sequence ID" value="AAO24596.1"/>
    <property type="molecule type" value="mRNA"/>
</dbReference>
<dbReference type="PIR" id="T02565">
    <property type="entry name" value="T02565"/>
</dbReference>
<dbReference type="RefSeq" id="NP_001323933.1">
    <property type="nucleotide sequence ID" value="NM_001336409.1"/>
</dbReference>
<dbReference type="RefSeq" id="NP_180825.2">
    <property type="nucleotide sequence ID" value="NM_128825.3"/>
</dbReference>
<dbReference type="SMR" id="O48851"/>
<dbReference type="STRING" id="3702.O48851"/>
<dbReference type="GlyCosmos" id="O48851">
    <property type="glycosylation" value="23 sites, No reported glycans"/>
</dbReference>
<dbReference type="GlyGen" id="O48851">
    <property type="glycosylation" value="23 sites"/>
</dbReference>
<dbReference type="PaxDb" id="3702-AT2G32660.1"/>
<dbReference type="ProteomicsDB" id="227981"/>
<dbReference type="EnsemblPlants" id="AT2G32660.2">
    <property type="protein sequence ID" value="AT2G32660.2"/>
    <property type="gene ID" value="AT2G32660"/>
</dbReference>
<dbReference type="GeneID" id="817826"/>
<dbReference type="Gramene" id="AT2G32660.2">
    <property type="protein sequence ID" value="AT2G32660.2"/>
    <property type="gene ID" value="AT2G32660"/>
</dbReference>
<dbReference type="KEGG" id="ath:AT2G32660"/>
<dbReference type="Araport" id="AT2G32660"/>
<dbReference type="TAIR" id="AT2G32660">
    <property type="gene designation" value="RLP22"/>
</dbReference>
<dbReference type="eggNOG" id="KOG0619">
    <property type="taxonomic scope" value="Eukaryota"/>
</dbReference>
<dbReference type="InParanoid" id="O48851"/>
<dbReference type="OMA" id="DHNKIND"/>
<dbReference type="PRO" id="PR:O48851"/>
<dbReference type="Proteomes" id="UP000006548">
    <property type="component" value="Chromosome 2"/>
</dbReference>
<dbReference type="ExpressionAtlas" id="O48851">
    <property type="expression patterns" value="baseline and differential"/>
</dbReference>
<dbReference type="GO" id="GO:0005886">
    <property type="term" value="C:plasma membrane"/>
    <property type="evidence" value="ECO:0007669"/>
    <property type="project" value="UniProtKB-SubCell"/>
</dbReference>
<dbReference type="FunFam" id="3.80.10.10:FF:000062">
    <property type="entry name" value="protein STRUBBELIG-RECEPTOR FAMILY 3"/>
    <property type="match status" value="1"/>
</dbReference>
<dbReference type="FunFam" id="3.80.10.10:FF:000213">
    <property type="entry name" value="Tyrosine-sulfated glycopeptide receptor 1"/>
    <property type="match status" value="1"/>
</dbReference>
<dbReference type="Gene3D" id="3.80.10.10">
    <property type="entry name" value="Ribonuclease Inhibitor"/>
    <property type="match status" value="4"/>
</dbReference>
<dbReference type="InterPro" id="IPR001611">
    <property type="entry name" value="Leu-rich_rpt"/>
</dbReference>
<dbReference type="InterPro" id="IPR003591">
    <property type="entry name" value="Leu-rich_rpt_typical-subtyp"/>
</dbReference>
<dbReference type="InterPro" id="IPR032675">
    <property type="entry name" value="LRR_dom_sf"/>
</dbReference>
<dbReference type="InterPro" id="IPR046956">
    <property type="entry name" value="RLP23-like"/>
</dbReference>
<dbReference type="PANTHER" id="PTHR48061">
    <property type="entry name" value="LEUCINE-RICH REPEAT RECEPTOR PROTEIN KINASE EMS1-LIKE-RELATED"/>
    <property type="match status" value="1"/>
</dbReference>
<dbReference type="PANTHER" id="PTHR48061:SF2">
    <property type="entry name" value="RECEPTOR LIKE PROTEIN 30-LIKE"/>
    <property type="match status" value="1"/>
</dbReference>
<dbReference type="Pfam" id="PF00560">
    <property type="entry name" value="LRR_1"/>
    <property type="match status" value="4"/>
</dbReference>
<dbReference type="Pfam" id="PF13855">
    <property type="entry name" value="LRR_8"/>
    <property type="match status" value="3"/>
</dbReference>
<dbReference type="PRINTS" id="PR00019">
    <property type="entry name" value="LEURICHRPT"/>
</dbReference>
<dbReference type="SMART" id="SM00369">
    <property type="entry name" value="LRR_TYP"/>
    <property type="match status" value="9"/>
</dbReference>
<dbReference type="SUPFAM" id="SSF52058">
    <property type="entry name" value="L domain-like"/>
    <property type="match status" value="3"/>
</dbReference>
<name>RLP22_ARATH</name>
<keyword id="KW-1003">Cell membrane</keyword>
<keyword id="KW-0325">Glycoprotein</keyword>
<keyword id="KW-0433">Leucine-rich repeat</keyword>
<keyword id="KW-0472">Membrane</keyword>
<keyword id="KW-0675">Receptor</keyword>
<keyword id="KW-1185">Reference proteome</keyword>
<keyword id="KW-0677">Repeat</keyword>
<keyword id="KW-0732">Signal</keyword>
<keyword id="KW-0812">Transmembrane</keyword>
<keyword id="KW-1133">Transmembrane helix</keyword>
<feature type="signal peptide" evidence="1">
    <location>
        <begin position="1"/>
        <end position="20"/>
    </location>
</feature>
<feature type="chain" id="PRO_5013530149" description="Receptor like protein 22">
    <location>
        <begin position="21"/>
        <end position="771"/>
    </location>
</feature>
<feature type="topological domain" description="Extracellular" evidence="1">
    <location>
        <begin position="21"/>
        <end position="729"/>
    </location>
</feature>
<feature type="transmembrane region" description="Helical" evidence="1">
    <location>
        <begin position="730"/>
        <end position="750"/>
    </location>
</feature>
<feature type="topological domain" description="Cytoplasmic" evidence="1">
    <location>
        <begin position="751"/>
        <end position="771"/>
    </location>
</feature>
<feature type="repeat" description="LRR 1" evidence="1">
    <location>
        <begin position="86"/>
        <end position="110"/>
    </location>
</feature>
<feature type="repeat" description="LRR 2" evidence="1">
    <location>
        <begin position="112"/>
        <end position="135"/>
    </location>
</feature>
<feature type="repeat" description="LRR 3" evidence="1">
    <location>
        <begin position="136"/>
        <end position="159"/>
    </location>
</feature>
<feature type="repeat" description="LRR 4" evidence="1">
    <location>
        <begin position="160"/>
        <end position="183"/>
    </location>
</feature>
<feature type="repeat" description="LRR 5" evidence="1">
    <location>
        <begin position="185"/>
        <end position="206"/>
    </location>
</feature>
<feature type="repeat" description="LRR 6" evidence="1">
    <location>
        <begin position="207"/>
        <end position="230"/>
    </location>
</feature>
<feature type="repeat" description="LRR 7" evidence="1">
    <location>
        <begin position="232"/>
        <end position="254"/>
    </location>
</feature>
<feature type="repeat" description="LRR 8" evidence="1">
    <location>
        <begin position="255"/>
        <end position="281"/>
    </location>
</feature>
<feature type="repeat" description="LRR 9" evidence="1">
    <location>
        <begin position="283"/>
        <end position="303"/>
    </location>
</feature>
<feature type="repeat" description="LRR 10" evidence="1">
    <location>
        <begin position="304"/>
        <end position="327"/>
    </location>
</feature>
<feature type="repeat" description="LRR 11" evidence="1">
    <location>
        <begin position="329"/>
        <end position="350"/>
    </location>
</feature>
<feature type="repeat" description="LRR 12" evidence="1">
    <location>
        <begin position="353"/>
        <end position="377"/>
    </location>
</feature>
<feature type="repeat" description="LRR 13; degenerate" evidence="4">
    <location>
        <begin position="378"/>
        <end position="397"/>
    </location>
</feature>
<feature type="repeat" description="LRR 14" evidence="1">
    <location>
        <begin position="398"/>
        <end position="419"/>
    </location>
</feature>
<feature type="repeat" description="LRR 15" evidence="1">
    <location>
        <begin position="420"/>
        <end position="443"/>
    </location>
</feature>
<feature type="repeat" description="LRR 16" evidence="1">
    <location>
        <begin position="445"/>
        <end position="467"/>
    </location>
</feature>
<feature type="repeat" description="LRR 17" evidence="1">
    <location>
        <begin position="469"/>
        <end position="491"/>
    </location>
</feature>
<feature type="repeat" description="LRR 18" evidence="1">
    <location>
        <begin position="492"/>
        <end position="516"/>
    </location>
</feature>
<feature type="repeat" description="LRR 19" evidence="1">
    <location>
        <begin position="519"/>
        <end position="543"/>
    </location>
</feature>
<feature type="repeat" description="LRR 20" evidence="1">
    <location>
        <begin position="588"/>
        <end position="612"/>
    </location>
</feature>
<feature type="repeat" description="LRR 21" evidence="1">
    <location>
        <begin position="613"/>
        <end position="636"/>
    </location>
</feature>
<feature type="repeat" description="LRR 22" evidence="1">
    <location>
        <begin position="637"/>
        <end position="660"/>
    </location>
</feature>
<feature type="repeat" description="LRR 23" evidence="1">
    <location>
        <begin position="662"/>
        <end position="685"/>
    </location>
</feature>
<feature type="glycosylation site" description="N-linked (GlcNAc...) asparagine" evidence="2">
    <location>
        <position position="46"/>
    </location>
</feature>
<feature type="glycosylation site" description="N-linked (GlcNAc...) asparagine" evidence="2">
    <location>
        <position position="58"/>
    </location>
</feature>
<feature type="glycosylation site" description="N-linked (GlcNAc...) asparagine" evidence="2">
    <location>
        <position position="80"/>
    </location>
</feature>
<feature type="glycosylation site" description="N-linked (GlcNAc...) asparagine" evidence="2">
    <location>
        <position position="93"/>
    </location>
</feature>
<feature type="glycosylation site" description="N-linked (GlcNAc...) asparagine" evidence="2">
    <location>
        <position position="134"/>
    </location>
</feature>
<feature type="glycosylation site" description="N-linked (GlcNAc...) asparagine" evidence="2">
    <location>
        <position position="158"/>
    </location>
</feature>
<feature type="glycosylation site" description="N-linked (GlcNAc...) asparagine" evidence="2">
    <location>
        <position position="204"/>
    </location>
</feature>
<feature type="glycosylation site" description="N-linked (GlcNAc...) asparagine" evidence="2">
    <location>
        <position position="242"/>
    </location>
</feature>
<feature type="glycosylation site" description="N-linked (GlcNAc...) asparagine" evidence="2">
    <location>
        <position position="292"/>
    </location>
</feature>
<feature type="glycosylation site" description="N-linked (GlcNAc...) asparagine" evidence="2">
    <location>
        <position position="337"/>
    </location>
</feature>
<feature type="glycosylation site" description="N-linked (GlcNAc...) asparagine" evidence="2">
    <location>
        <position position="344"/>
    </location>
</feature>
<feature type="glycosylation site" description="N-linked (GlcNAc...) asparagine" evidence="2">
    <location>
        <position position="353"/>
    </location>
</feature>
<feature type="glycosylation site" description="N-linked (GlcNAc...) asparagine" evidence="2">
    <location>
        <position position="379"/>
    </location>
</feature>
<feature type="glycosylation site" description="N-linked (GlcNAc...) asparagine" evidence="2">
    <location>
        <position position="384"/>
    </location>
</feature>
<feature type="glycosylation site" description="N-linked (GlcNAc...) asparagine" evidence="2">
    <location>
        <position position="397"/>
    </location>
</feature>
<feature type="glycosylation site" description="N-linked (GlcNAc...) asparagine" evidence="2">
    <location>
        <position position="410"/>
    </location>
</feature>
<feature type="glycosylation site" description="N-linked (GlcNAc...) asparagine" evidence="2">
    <location>
        <position position="421"/>
    </location>
</feature>
<feature type="glycosylation site" description="N-linked (GlcNAc...) asparagine" evidence="2">
    <location>
        <position position="466"/>
    </location>
</feature>
<feature type="glycosylation site" description="N-linked (GlcNAc...) asparagine" evidence="2">
    <location>
        <position position="481"/>
    </location>
</feature>
<feature type="glycosylation site" description="N-linked (GlcNAc...) asparagine" evidence="2">
    <location>
        <position position="543"/>
    </location>
</feature>
<feature type="glycosylation site" description="N-linked (GlcNAc...) asparagine" evidence="2">
    <location>
        <position position="619"/>
    </location>
</feature>
<feature type="glycosylation site" description="N-linked (GlcNAc...) asparagine" evidence="2">
    <location>
        <position position="622"/>
    </location>
</feature>
<feature type="glycosylation site" description="N-linked (GlcNAc...) asparagine" evidence="2">
    <location>
        <position position="635"/>
    </location>
</feature>
<feature type="sequence conflict" description="In Ref. 4; AAO24596." evidence="4" ref="4">
    <original>N</original>
    <variation>S</variation>
    <location>
        <position position="430"/>
    </location>
</feature>